<feature type="chain" id="PRO_0000370992" description="ATP synthase subunit delta">
    <location>
        <begin position="1"/>
        <end position="221"/>
    </location>
</feature>
<feature type="region of interest" description="Disordered" evidence="2">
    <location>
        <begin position="1"/>
        <end position="31"/>
    </location>
</feature>
<feature type="compositionally biased region" description="Basic and acidic residues" evidence="2">
    <location>
        <begin position="1"/>
        <end position="13"/>
    </location>
</feature>
<evidence type="ECO:0000255" key="1">
    <source>
        <dbReference type="HAMAP-Rule" id="MF_01416"/>
    </source>
</evidence>
<evidence type="ECO:0000256" key="2">
    <source>
        <dbReference type="SAM" id="MobiDB-lite"/>
    </source>
</evidence>
<dbReference type="EMBL" id="CP000394">
    <property type="protein sequence ID" value="ABI62957.1"/>
    <property type="molecule type" value="Genomic_DNA"/>
</dbReference>
<dbReference type="SMR" id="Q0BQE5"/>
<dbReference type="STRING" id="391165.GbCGDNIH1_2059"/>
<dbReference type="KEGG" id="gbe:GbCGDNIH1_2059"/>
<dbReference type="eggNOG" id="COG0712">
    <property type="taxonomic scope" value="Bacteria"/>
</dbReference>
<dbReference type="HOGENOM" id="CLU_085114_0_1_5"/>
<dbReference type="Proteomes" id="UP000001963">
    <property type="component" value="Chromosome"/>
</dbReference>
<dbReference type="GO" id="GO:0005886">
    <property type="term" value="C:plasma membrane"/>
    <property type="evidence" value="ECO:0007669"/>
    <property type="project" value="UniProtKB-SubCell"/>
</dbReference>
<dbReference type="GO" id="GO:0045259">
    <property type="term" value="C:proton-transporting ATP synthase complex"/>
    <property type="evidence" value="ECO:0007669"/>
    <property type="project" value="UniProtKB-KW"/>
</dbReference>
<dbReference type="GO" id="GO:0046933">
    <property type="term" value="F:proton-transporting ATP synthase activity, rotational mechanism"/>
    <property type="evidence" value="ECO:0007669"/>
    <property type="project" value="UniProtKB-UniRule"/>
</dbReference>
<dbReference type="Gene3D" id="1.10.520.20">
    <property type="entry name" value="N-terminal domain of the delta subunit of the F1F0-ATP synthase"/>
    <property type="match status" value="1"/>
</dbReference>
<dbReference type="HAMAP" id="MF_01416">
    <property type="entry name" value="ATP_synth_delta_bact"/>
    <property type="match status" value="1"/>
</dbReference>
<dbReference type="InterPro" id="IPR026015">
    <property type="entry name" value="ATP_synth_OSCP/delta_N_sf"/>
</dbReference>
<dbReference type="InterPro" id="IPR020781">
    <property type="entry name" value="ATPase_OSCP/d_CS"/>
</dbReference>
<dbReference type="InterPro" id="IPR000711">
    <property type="entry name" value="ATPase_OSCP/dsu"/>
</dbReference>
<dbReference type="NCBIfam" id="TIGR01145">
    <property type="entry name" value="ATP_synt_delta"/>
    <property type="match status" value="1"/>
</dbReference>
<dbReference type="NCBIfam" id="NF004406">
    <property type="entry name" value="PRK05758.3-2"/>
    <property type="match status" value="1"/>
</dbReference>
<dbReference type="PANTHER" id="PTHR11910">
    <property type="entry name" value="ATP SYNTHASE DELTA CHAIN"/>
    <property type="match status" value="1"/>
</dbReference>
<dbReference type="Pfam" id="PF00213">
    <property type="entry name" value="OSCP"/>
    <property type="match status" value="1"/>
</dbReference>
<dbReference type="PRINTS" id="PR00125">
    <property type="entry name" value="ATPASEDELTA"/>
</dbReference>
<dbReference type="SUPFAM" id="SSF47928">
    <property type="entry name" value="N-terminal domain of the delta subunit of the F1F0-ATP synthase"/>
    <property type="match status" value="1"/>
</dbReference>
<dbReference type="PROSITE" id="PS00389">
    <property type="entry name" value="ATPASE_DELTA"/>
    <property type="match status" value="1"/>
</dbReference>
<comment type="function">
    <text evidence="1">F(1)F(0) ATP synthase produces ATP from ADP in the presence of a proton or sodium gradient. F-type ATPases consist of two structural domains, F(1) containing the extramembraneous catalytic core and F(0) containing the membrane proton channel, linked together by a central stalk and a peripheral stalk. During catalysis, ATP synthesis in the catalytic domain of F(1) is coupled via a rotary mechanism of the central stalk subunits to proton translocation.</text>
</comment>
<comment type="function">
    <text evidence="1">This protein is part of the stalk that links CF(0) to CF(1). It either transmits conformational changes from CF(0) to CF(1) or is implicated in proton conduction.</text>
</comment>
<comment type="subunit">
    <text evidence="1">F-type ATPases have 2 components, F(1) - the catalytic core - and F(0) - the membrane proton channel. F(1) has five subunits: alpha(3), beta(3), gamma(1), delta(1), epsilon(1). F(0) has three main subunits: a(1), b(2) and c(10-14). The alpha and beta chains form an alternating ring which encloses part of the gamma chain. F(1) is attached to F(0) by a central stalk formed by the gamma and epsilon chains, while a peripheral stalk is formed by the delta and b chains.</text>
</comment>
<comment type="subcellular location">
    <subcellularLocation>
        <location evidence="1">Cell inner membrane</location>
        <topology evidence="1">Peripheral membrane protein</topology>
    </subcellularLocation>
</comment>
<comment type="similarity">
    <text evidence="1">Belongs to the ATPase delta chain family.</text>
</comment>
<keyword id="KW-0066">ATP synthesis</keyword>
<keyword id="KW-0997">Cell inner membrane</keyword>
<keyword id="KW-1003">Cell membrane</keyword>
<keyword id="KW-0139">CF(1)</keyword>
<keyword id="KW-0375">Hydrogen ion transport</keyword>
<keyword id="KW-0406">Ion transport</keyword>
<keyword id="KW-0472">Membrane</keyword>
<keyword id="KW-1185">Reference proteome</keyword>
<keyword id="KW-0813">Transport</keyword>
<proteinExistence type="inferred from homology"/>
<accession>Q0BQE5</accession>
<gene>
    <name evidence="1" type="primary">atpH</name>
    <name type="ordered locus">GbCGDNIH1_2059</name>
</gene>
<organism>
    <name type="scientific">Granulibacter bethesdensis (strain ATCC BAA-1260 / CGDNIH1)</name>
    <dbReference type="NCBI Taxonomy" id="391165"/>
    <lineage>
        <taxon>Bacteria</taxon>
        <taxon>Pseudomonadati</taxon>
        <taxon>Pseudomonadota</taxon>
        <taxon>Alphaproteobacteria</taxon>
        <taxon>Acetobacterales</taxon>
        <taxon>Acetobacteraceae</taxon>
        <taxon>Granulibacter</taxon>
    </lineage>
</organism>
<sequence>MGPVPEEHQRESETVASNGANESGAAVTGIPQREAKHVSGTAVSGLAKRYASALYSYAGDSGDLDGVIARIEALGRLIDESADLRSLLGSPLVDVNRARDAVLAVLDRQGFTRIERNFVGTVANNRRLGSLRSIISAFAVLVAEKRGEAVAVVESAHELTEVQEHQLRASLIEAGYGNVRIEKHVDPSLLGGLVVRIGTRLYDTSLKSRLQRLQYAMKGAA</sequence>
<protein>
    <recommendedName>
        <fullName evidence="1">ATP synthase subunit delta</fullName>
    </recommendedName>
    <alternativeName>
        <fullName evidence="1">ATP synthase F(1) sector subunit delta</fullName>
    </alternativeName>
    <alternativeName>
        <fullName evidence="1">F-type ATPase subunit delta</fullName>
        <shortName evidence="1">F-ATPase subunit delta</shortName>
    </alternativeName>
</protein>
<reference key="1">
    <citation type="journal article" date="2007" name="J. Bacteriol.">
        <title>Genome sequence analysis of the emerging human pathogenic acetic acid bacterium Granulibacter bethesdensis.</title>
        <authorList>
            <person name="Greenberg D.E."/>
            <person name="Porcella S.F."/>
            <person name="Zelazny A.M."/>
            <person name="Virtaneva K."/>
            <person name="Sturdevant D.E."/>
            <person name="Kupko J.J. III"/>
            <person name="Barbian K.D."/>
            <person name="Babar A."/>
            <person name="Dorward D.W."/>
            <person name="Holland S.M."/>
        </authorList>
    </citation>
    <scope>NUCLEOTIDE SEQUENCE [LARGE SCALE GENOMIC DNA]</scope>
    <source>
        <strain>ATCC BAA-1260 / CGDNIH1</strain>
    </source>
</reference>
<name>ATPD_GRABC</name>